<keyword id="KW-0002">3D-structure</keyword>
<keyword id="KW-0007">Acetylation</keyword>
<keyword id="KW-0025">Alternative splicing</keyword>
<keyword id="KW-0067">ATP-binding</keyword>
<keyword id="KW-0963">Cytoplasm</keyword>
<keyword id="KW-0225">Disease variant</keyword>
<keyword id="KW-0418">Kinase</keyword>
<keyword id="KW-0496">Mitochondrion</keyword>
<keyword id="KW-0547">Nucleotide-binding</keyword>
<keyword id="KW-1267">Proteomics identification</keyword>
<keyword id="KW-1185">Reference proteome</keyword>
<keyword id="KW-0808">Transferase</keyword>
<evidence type="ECO:0000250" key="1">
    <source>
        <dbReference type="UniProtKB" id="P46195"/>
    </source>
</evidence>
<evidence type="ECO:0000250" key="2">
    <source>
        <dbReference type="UniProtKB" id="Q64520"/>
    </source>
</evidence>
<evidence type="ECO:0000255" key="3">
    <source>
        <dbReference type="PROSITE-ProRule" id="PRU00100"/>
    </source>
</evidence>
<evidence type="ECO:0000269" key="4">
    <source>
    </source>
</evidence>
<evidence type="ECO:0000269" key="5">
    <source>
    </source>
</evidence>
<evidence type="ECO:0000269" key="6">
    <source>
    </source>
</evidence>
<evidence type="ECO:0000269" key="7">
    <source>
    </source>
</evidence>
<evidence type="ECO:0000269" key="8">
    <source>
    </source>
</evidence>
<evidence type="ECO:0000269" key="9">
    <source>
    </source>
</evidence>
<evidence type="ECO:0000269" key="10">
    <source>
    </source>
</evidence>
<evidence type="ECO:0000303" key="11">
    <source>
    </source>
</evidence>
<evidence type="ECO:0000303" key="12">
    <source>
    </source>
</evidence>
<evidence type="ECO:0000303" key="13">
    <source>
    </source>
</evidence>
<evidence type="ECO:0000305" key="14"/>
<evidence type="ECO:0000312" key="15">
    <source>
        <dbReference type="HGNC" id="HGNC:4693"/>
    </source>
</evidence>
<evidence type="ECO:0007744" key="16">
    <source>
    </source>
</evidence>
<evidence type="ECO:0007829" key="17">
    <source>
        <dbReference type="PDB" id="6NUI"/>
    </source>
</evidence>
<evidence type="ECO:0007829" key="18">
    <source>
        <dbReference type="PDB" id="8PTS"/>
    </source>
</evidence>
<sequence>MSGPRPVVLSGPSGAGKSTLLKRLLQEHSGIFGFSVSHTTRNPRPGEENGKDYYFVTREVMQRDIAAGDFIEHAEFSGNLYGTSKVAVQAVQAMNRICVLDVDLQGVRNIKATDLRPIYISVQPPSLHVLEQRLRQRNTETEESLVKRLAAAQADMESSKEPGLFDVVIINDSLDQAYAELKEALSEEIKKAQRTGA</sequence>
<accession>Q16774</accession>
<accession>B1ANH1</accession>
<dbReference type="EC" id="2.7.4.8" evidence="6"/>
<dbReference type="EMBL" id="L76200">
    <property type="protein sequence ID" value="AAC37598.1"/>
    <property type="molecule type" value="mRNA"/>
</dbReference>
<dbReference type="EMBL" id="U66895">
    <property type="protein sequence ID" value="AAC50659.1"/>
    <property type="molecule type" value="mRNA"/>
</dbReference>
<dbReference type="EMBL" id="AK303845">
    <property type="protein sequence ID" value="BAG64788.1"/>
    <property type="molecule type" value="mRNA"/>
</dbReference>
<dbReference type="EMBL" id="AL359510">
    <property type="status" value="NOT_ANNOTATED_CDS"/>
    <property type="molecule type" value="Genomic_DNA"/>
</dbReference>
<dbReference type="EMBL" id="CH471098">
    <property type="protein sequence ID" value="EAW69856.1"/>
    <property type="molecule type" value="Genomic_DNA"/>
</dbReference>
<dbReference type="EMBL" id="BC006249">
    <property type="protein sequence ID" value="AAH06249.1"/>
    <property type="molecule type" value="mRNA"/>
</dbReference>
<dbReference type="EMBL" id="BC009914">
    <property type="protein sequence ID" value="AAH09914.1"/>
    <property type="molecule type" value="mRNA"/>
</dbReference>
<dbReference type="CCDS" id="CCDS1568.1">
    <molecule id="Q16774-1"/>
</dbReference>
<dbReference type="CCDS" id="CCDS53481.1">
    <molecule id="Q16774-2"/>
</dbReference>
<dbReference type="CCDS" id="CCDS55689.1">
    <molecule id="Q16774-3"/>
</dbReference>
<dbReference type="PIR" id="S68864">
    <property type="entry name" value="S68864"/>
</dbReference>
<dbReference type="RefSeq" id="NP_000849.1">
    <molecule id="Q16774-1"/>
    <property type="nucleotide sequence ID" value="NM_000858.7"/>
</dbReference>
<dbReference type="RefSeq" id="NP_001152862.1">
    <molecule id="Q16774-2"/>
    <property type="nucleotide sequence ID" value="NM_001159390.2"/>
</dbReference>
<dbReference type="RefSeq" id="NP_001152863.1">
    <molecule id="Q16774-1"/>
    <property type="nucleotide sequence ID" value="NM_001159391.3"/>
</dbReference>
<dbReference type="RefSeq" id="NP_001229768.1">
    <molecule id="Q16774-1"/>
    <property type="nucleotide sequence ID" value="NM_001242839.1"/>
</dbReference>
<dbReference type="RefSeq" id="NP_001229769.1">
    <molecule id="Q16774-3"/>
    <property type="nucleotide sequence ID" value="NM_001242840.3"/>
</dbReference>
<dbReference type="PDB" id="6NUI">
    <property type="method" value="NMR"/>
    <property type="chains" value="A=1-197"/>
</dbReference>
<dbReference type="PDB" id="8PTS">
    <property type="method" value="X-ray"/>
    <property type="resolution" value="1.76 A"/>
    <property type="chains" value="A/B=1-197"/>
</dbReference>
<dbReference type="PDBsum" id="6NUI"/>
<dbReference type="PDBsum" id="8PTS"/>
<dbReference type="SMR" id="Q16774"/>
<dbReference type="BioGRID" id="109242">
    <property type="interactions" value="58"/>
</dbReference>
<dbReference type="FunCoup" id="Q16774">
    <property type="interactions" value="1172"/>
</dbReference>
<dbReference type="IntAct" id="Q16774">
    <property type="interactions" value="13"/>
</dbReference>
<dbReference type="STRING" id="9606.ENSP00000355689"/>
<dbReference type="ChEMBL" id="CHEMBL4989"/>
<dbReference type="DrugBank" id="DB00787">
    <property type="generic name" value="Acyclovir"/>
</dbReference>
<dbReference type="DrugBank" id="DB01972">
    <property type="generic name" value="Guanosine-5'-Monophosphate"/>
</dbReference>
<dbReference type="DrugBank" id="DB00577">
    <property type="generic name" value="Valaciclovir"/>
</dbReference>
<dbReference type="iPTMnet" id="Q16774"/>
<dbReference type="MetOSite" id="Q16774"/>
<dbReference type="PhosphoSitePlus" id="Q16774"/>
<dbReference type="BioMuta" id="GUK1"/>
<dbReference type="DMDM" id="2497498"/>
<dbReference type="jPOST" id="Q16774"/>
<dbReference type="MassIVE" id="Q16774"/>
<dbReference type="PaxDb" id="9606-ENSP00000355689"/>
<dbReference type="PeptideAtlas" id="Q16774"/>
<dbReference type="ProteomicsDB" id="3255"/>
<dbReference type="ProteomicsDB" id="61062">
    <molecule id="Q16774-1"/>
</dbReference>
<dbReference type="ProteomicsDB" id="61063">
    <molecule id="Q16774-2"/>
</dbReference>
<dbReference type="Pumba" id="Q16774"/>
<dbReference type="Antibodypedia" id="34661">
    <property type="antibodies" value="262 antibodies from 23 providers"/>
</dbReference>
<dbReference type="DNASU" id="2987"/>
<dbReference type="Ensembl" id="ENST00000366728.6">
    <molecule id="Q16774-3"/>
    <property type="protein sequence ID" value="ENSP00000355689.2"/>
    <property type="gene ID" value="ENSG00000143774.18"/>
</dbReference>
<dbReference type="Ensembl" id="ENST00000366730.5">
    <molecule id="Q16774-1"/>
    <property type="protein sequence ID" value="ENSP00000355691.1"/>
    <property type="gene ID" value="ENSG00000143774.18"/>
</dbReference>
<dbReference type="Ensembl" id="ENST00000453943.6">
    <molecule id="Q16774-2"/>
    <property type="protein sequence ID" value="ENSP00000401832.2"/>
    <property type="gene ID" value="ENSG00000143774.18"/>
</dbReference>
<dbReference type="GeneID" id="2987"/>
<dbReference type="KEGG" id="hsa:2987"/>
<dbReference type="MANE-Select" id="ENST00000453943.6">
    <molecule id="Q16774-2"/>
    <property type="protein sequence ID" value="ENSP00000401832.2"/>
    <property type="RefSeq nucleotide sequence ID" value="NM_001159390.2"/>
    <property type="RefSeq protein sequence ID" value="NP_001152862.1"/>
</dbReference>
<dbReference type="UCSC" id="uc001hsi.4">
    <molecule id="Q16774-1"/>
    <property type="organism name" value="human"/>
</dbReference>
<dbReference type="AGR" id="HGNC:4693"/>
<dbReference type="CTD" id="2987"/>
<dbReference type="DisGeNET" id="2987"/>
<dbReference type="GeneCards" id="GUK1"/>
<dbReference type="HGNC" id="HGNC:4693">
    <property type="gene designation" value="GUK1"/>
</dbReference>
<dbReference type="HPA" id="ENSG00000143774">
    <property type="expression patterns" value="Tissue enhanced (brain)"/>
</dbReference>
<dbReference type="MIM" id="139270">
    <property type="type" value="gene"/>
</dbReference>
<dbReference type="MIM" id="621071">
    <property type="type" value="phenotype"/>
</dbReference>
<dbReference type="neXtProt" id="NX_Q16774"/>
<dbReference type="OpenTargets" id="ENSG00000143774"/>
<dbReference type="PharmGKB" id="PA29072"/>
<dbReference type="VEuPathDB" id="HostDB:ENSG00000143774"/>
<dbReference type="eggNOG" id="KOG0707">
    <property type="taxonomic scope" value="Eukaryota"/>
</dbReference>
<dbReference type="GeneTree" id="ENSGT00940000155815"/>
<dbReference type="HOGENOM" id="CLU_001715_0_2_1"/>
<dbReference type="InParanoid" id="Q16774"/>
<dbReference type="OMA" id="EWAVVHG"/>
<dbReference type="OrthoDB" id="6334211at2759"/>
<dbReference type="PAN-GO" id="Q16774">
    <property type="GO annotations" value="2 GO annotations based on evolutionary models"/>
</dbReference>
<dbReference type="PhylomeDB" id="Q16774"/>
<dbReference type="TreeFam" id="TF314473"/>
<dbReference type="BioCyc" id="MetaCyc:HS07104-MONOMER"/>
<dbReference type="BRENDA" id="2.7.4.8">
    <property type="organism ID" value="2681"/>
</dbReference>
<dbReference type="PathwayCommons" id="Q16774"/>
<dbReference type="Reactome" id="R-HSA-499943">
    <property type="pathway name" value="Interconversion of nucleotide di- and triphosphates"/>
</dbReference>
<dbReference type="Reactome" id="R-HSA-9748787">
    <property type="pathway name" value="Azathioprine ADME"/>
</dbReference>
<dbReference type="SABIO-RK" id="Q16774"/>
<dbReference type="SignaLink" id="Q16774"/>
<dbReference type="BioGRID-ORCS" id="2987">
    <property type="hits" value="758 hits in 1135 CRISPR screens"/>
</dbReference>
<dbReference type="CD-CODE" id="FB4E32DD">
    <property type="entry name" value="Presynaptic clusters and postsynaptic densities"/>
</dbReference>
<dbReference type="ChiTaRS" id="GUK1">
    <property type="organism name" value="human"/>
</dbReference>
<dbReference type="GeneWiki" id="GUK1"/>
<dbReference type="GenomeRNAi" id="2987"/>
<dbReference type="Pharos" id="Q16774">
    <property type="development level" value="Tbio"/>
</dbReference>
<dbReference type="PRO" id="PR:Q16774"/>
<dbReference type="Proteomes" id="UP000005640">
    <property type="component" value="Chromosome 1"/>
</dbReference>
<dbReference type="RNAct" id="Q16774">
    <property type="molecule type" value="protein"/>
</dbReference>
<dbReference type="Bgee" id="ENSG00000143774">
    <property type="expression patterns" value="Expressed in right frontal lobe and 212 other cell types or tissues"/>
</dbReference>
<dbReference type="ExpressionAtlas" id="Q16774">
    <property type="expression patterns" value="baseline and differential"/>
</dbReference>
<dbReference type="GO" id="GO:0005829">
    <property type="term" value="C:cytosol"/>
    <property type="evidence" value="ECO:0000250"/>
    <property type="project" value="UniProtKB"/>
</dbReference>
<dbReference type="GO" id="GO:0005739">
    <property type="term" value="C:mitochondrion"/>
    <property type="evidence" value="ECO:0006056"/>
    <property type="project" value="FlyBase"/>
</dbReference>
<dbReference type="GO" id="GO:0001917">
    <property type="term" value="C:photoreceptor inner segment"/>
    <property type="evidence" value="ECO:0000250"/>
    <property type="project" value="UniProtKB"/>
</dbReference>
<dbReference type="GO" id="GO:0005524">
    <property type="term" value="F:ATP binding"/>
    <property type="evidence" value="ECO:0000250"/>
    <property type="project" value="UniProtKB"/>
</dbReference>
<dbReference type="GO" id="GO:0004385">
    <property type="term" value="F:guanylate kinase activity"/>
    <property type="evidence" value="ECO:0000314"/>
    <property type="project" value="UniProtKB"/>
</dbReference>
<dbReference type="GO" id="GO:0046060">
    <property type="term" value="P:dATP metabolic process"/>
    <property type="evidence" value="ECO:0007669"/>
    <property type="project" value="Ensembl"/>
</dbReference>
<dbReference type="GO" id="GO:0006185">
    <property type="term" value="P:dGDP biosynthetic process"/>
    <property type="evidence" value="ECO:0000315"/>
    <property type="project" value="UniProtKB"/>
</dbReference>
<dbReference type="GO" id="GO:0046054">
    <property type="term" value="P:dGMP metabolic process"/>
    <property type="evidence" value="ECO:0007669"/>
    <property type="project" value="Ensembl"/>
</dbReference>
<dbReference type="GO" id="GO:0046711">
    <property type="term" value="P:GDP biosynthetic process"/>
    <property type="evidence" value="ECO:0007669"/>
    <property type="project" value="Ensembl"/>
</dbReference>
<dbReference type="GO" id="GO:0019673">
    <property type="term" value="P:GDP-mannose metabolic process"/>
    <property type="evidence" value="ECO:0007669"/>
    <property type="project" value="Ensembl"/>
</dbReference>
<dbReference type="GO" id="GO:0034436">
    <property type="term" value="P:glycoprotein transport"/>
    <property type="evidence" value="ECO:0007669"/>
    <property type="project" value="Ensembl"/>
</dbReference>
<dbReference type="GO" id="GO:0015949">
    <property type="term" value="P:nucleobase-containing small molecule interconversion"/>
    <property type="evidence" value="ECO:0000304"/>
    <property type="project" value="Reactome"/>
</dbReference>
<dbReference type="GO" id="GO:0006163">
    <property type="term" value="P:purine nucleotide metabolic process"/>
    <property type="evidence" value="ECO:0000314"/>
    <property type="project" value="UniProtKB"/>
</dbReference>
<dbReference type="GO" id="GO:0006805">
    <property type="term" value="P:xenobiotic metabolic process"/>
    <property type="evidence" value="ECO:0000314"/>
    <property type="project" value="UniProtKB"/>
</dbReference>
<dbReference type="CDD" id="cd00071">
    <property type="entry name" value="GMPK"/>
    <property type="match status" value="1"/>
</dbReference>
<dbReference type="FunFam" id="3.30.63.10:FF:000002">
    <property type="entry name" value="Guanylate kinase 1"/>
    <property type="match status" value="1"/>
</dbReference>
<dbReference type="FunFam" id="3.40.50.300:FF:000879">
    <property type="entry name" value="Guanylate kinase 1"/>
    <property type="match status" value="1"/>
</dbReference>
<dbReference type="Gene3D" id="3.40.50.300">
    <property type="entry name" value="P-loop containing nucleotide triphosphate hydrolases"/>
    <property type="match status" value="1"/>
</dbReference>
<dbReference type="InterPro" id="IPR008145">
    <property type="entry name" value="GK/Ca_channel_bsu"/>
</dbReference>
<dbReference type="InterPro" id="IPR008144">
    <property type="entry name" value="Guanylate_kin-like_dom"/>
</dbReference>
<dbReference type="InterPro" id="IPR017665">
    <property type="entry name" value="Guanylate_kinase"/>
</dbReference>
<dbReference type="InterPro" id="IPR020590">
    <property type="entry name" value="Guanylate_kinase_CS"/>
</dbReference>
<dbReference type="InterPro" id="IPR027417">
    <property type="entry name" value="P-loop_NTPase"/>
</dbReference>
<dbReference type="NCBIfam" id="TIGR03263">
    <property type="entry name" value="guanyl_kin"/>
    <property type="match status" value="1"/>
</dbReference>
<dbReference type="PANTHER" id="PTHR23117:SF13">
    <property type="entry name" value="GUANYLATE KINASE"/>
    <property type="match status" value="1"/>
</dbReference>
<dbReference type="PANTHER" id="PTHR23117">
    <property type="entry name" value="GUANYLATE KINASE-RELATED"/>
    <property type="match status" value="1"/>
</dbReference>
<dbReference type="Pfam" id="PF00625">
    <property type="entry name" value="Guanylate_kin"/>
    <property type="match status" value="1"/>
</dbReference>
<dbReference type="SMART" id="SM00072">
    <property type="entry name" value="GuKc"/>
    <property type="match status" value="1"/>
</dbReference>
<dbReference type="SUPFAM" id="SSF52540">
    <property type="entry name" value="P-loop containing nucleoside triphosphate hydrolases"/>
    <property type="match status" value="1"/>
</dbReference>
<dbReference type="PROSITE" id="PS00856">
    <property type="entry name" value="GUANYLATE_KINASE_1"/>
    <property type="match status" value="1"/>
</dbReference>
<dbReference type="PROSITE" id="PS50052">
    <property type="entry name" value="GUANYLATE_KINASE_2"/>
    <property type="match status" value="1"/>
</dbReference>
<gene>
    <name evidence="13 15" type="primary">GUK1</name>
    <name type="synonym">GMK</name>
    <name evidence="12" type="synonym">GMPK</name>
</gene>
<name>KGUA_HUMAN</name>
<organism>
    <name type="scientific">Homo sapiens</name>
    <name type="common">Human</name>
    <dbReference type="NCBI Taxonomy" id="9606"/>
    <lineage>
        <taxon>Eukaryota</taxon>
        <taxon>Metazoa</taxon>
        <taxon>Chordata</taxon>
        <taxon>Craniata</taxon>
        <taxon>Vertebrata</taxon>
        <taxon>Euteleostomi</taxon>
        <taxon>Mammalia</taxon>
        <taxon>Eutheria</taxon>
        <taxon>Euarchontoglires</taxon>
        <taxon>Primates</taxon>
        <taxon>Haplorrhini</taxon>
        <taxon>Catarrhini</taxon>
        <taxon>Hominidae</taxon>
        <taxon>Homo</taxon>
    </lineage>
</organism>
<feature type="initiator methionine" description="Removed" evidence="16">
    <location>
        <position position="1"/>
    </location>
</feature>
<feature type="chain" id="PRO_0000170651" description="Guanylate kinase">
    <location>
        <begin position="2"/>
        <end position="197"/>
    </location>
</feature>
<feature type="domain" description="Guanylate kinase-like" evidence="3">
    <location>
        <begin position="4"/>
        <end position="186"/>
    </location>
</feature>
<feature type="active site" evidence="2">
    <location>
        <position position="44"/>
    </location>
</feature>
<feature type="active site" evidence="2">
    <location>
        <position position="137"/>
    </location>
</feature>
<feature type="active site" evidence="2">
    <location>
        <position position="148"/>
    </location>
</feature>
<feature type="binding site" evidence="2">
    <location>
        <begin position="14"/>
        <end position="19"/>
    </location>
    <ligand>
        <name>ATP</name>
        <dbReference type="ChEBI" id="CHEBI:30616"/>
    </ligand>
</feature>
<feature type="binding site" evidence="2">
    <location>
        <begin position="37"/>
        <end position="51"/>
    </location>
    <ligand>
        <name>substrate</name>
    </ligand>
</feature>
<feature type="binding site" evidence="2">
    <location>
        <position position="137"/>
    </location>
    <ligand>
        <name>ATP</name>
        <dbReference type="ChEBI" id="CHEBI:30616"/>
    </ligand>
</feature>
<feature type="binding site" evidence="2">
    <location>
        <begin position="171"/>
        <end position="172"/>
    </location>
    <ligand>
        <name>ATP</name>
        <dbReference type="ChEBI" id="CHEBI:30616"/>
    </ligand>
</feature>
<feature type="modified residue" description="N-acetylserine" evidence="16">
    <location>
        <position position="2"/>
    </location>
</feature>
<feature type="splice variant" id="VSP_043778" description="In isoform 2 and isoform 3." evidence="11">
    <original>M</original>
    <variation>MLRRPLAGLAAAALGRAPPDGM</variation>
    <location>
        <position position="1"/>
    </location>
</feature>
<feature type="splice variant" id="VSP_047372" description="In isoform 3." evidence="14">
    <original>SKEPGLFDVVIINDSLDQAYAELKEALSEEIKKAQRTGA</original>
    <variation>RNQESSKDRRLRLAVCSRHPGPIQDQGSSIEPPPWQAIRQLCALGQHVEWRRCCPCGWNILG</variation>
    <location>
        <begin position="159"/>
        <end position="197"/>
    </location>
</feature>
<feature type="sequence variant" id="VAR_090358" description="In MTDPS21; uncertain significance." evidence="7">
    <original>G</original>
    <variation>R</variation>
    <location>
        <position position="11"/>
    </location>
</feature>
<feature type="sequence variant" id="VAR_090359" description="In MTDPS21; likely pathogenic." evidence="7">
    <location>
        <begin position="26"/>
        <end position="197"/>
    </location>
</feature>
<feature type="mutagenesis site" description="Increases in kcat with GMP as substrate." evidence="6">
    <original>S</original>
    <variation>L</variation>
    <location>
        <position position="2"/>
    </location>
</feature>
<feature type="mutagenesis site" description="Increases in kcat with GMP as substrate." evidence="6">
    <original>G</original>
    <variation>A</variation>
    <location>
        <position position="3"/>
    </location>
</feature>
<feature type="mutagenesis site" description="Leads to aggregation. Increases in kcat with GMP as substrate." evidence="6">
    <original>L</original>
    <variation>P</variation>
    <location>
        <position position="25"/>
    </location>
</feature>
<feature type="mutagenesis site" description="Increases in kcat with GMP as substrate." evidence="6">
    <original>V</original>
    <variation>M</variation>
    <location>
        <position position="91"/>
    </location>
</feature>
<feature type="mutagenesis site" description="Increases in kcat with GMP as substrate." evidence="6">
    <original>R</original>
    <variation>H</variation>
    <location>
        <position position="96"/>
    </location>
</feature>
<feature type="mutagenesis site" description="Increases in kcat with GMP as substrate." evidence="6">
    <original>R</original>
    <variation>Q</variation>
    <location>
        <position position="116"/>
    </location>
</feature>
<feature type="mutagenesis site" description="Increases in kcat with GMP as substrate." evidence="6">
    <original>S</original>
    <variation>F</variation>
    <location>
        <position position="121"/>
    </location>
</feature>
<feature type="mutagenesis site" description="Increases in kcat with GMP as substrate." evidence="6">
    <original>S</original>
    <variation>Y</variation>
    <location>
        <position position="186"/>
    </location>
</feature>
<feature type="strand" evidence="18">
    <location>
        <begin position="7"/>
        <end position="11"/>
    </location>
</feature>
<feature type="strand" evidence="17">
    <location>
        <begin position="12"/>
        <end position="14"/>
    </location>
</feature>
<feature type="helix" evidence="18">
    <location>
        <begin position="17"/>
        <end position="27"/>
    </location>
</feature>
<feature type="turn" evidence="18">
    <location>
        <begin position="29"/>
        <end position="31"/>
    </location>
</feature>
<feature type="strand" evidence="17">
    <location>
        <begin position="32"/>
        <end position="34"/>
    </location>
</feature>
<feature type="strand" evidence="17">
    <location>
        <begin position="38"/>
        <end position="41"/>
    </location>
</feature>
<feature type="turn" evidence="18">
    <location>
        <begin position="49"/>
        <end position="51"/>
    </location>
</feature>
<feature type="helix" evidence="18">
    <location>
        <begin position="58"/>
        <end position="67"/>
    </location>
</feature>
<feature type="strand" evidence="18">
    <location>
        <begin position="70"/>
        <end position="76"/>
    </location>
</feature>
<feature type="strand" evidence="18">
    <location>
        <begin position="79"/>
        <end position="84"/>
    </location>
</feature>
<feature type="helix" evidence="18">
    <location>
        <begin position="85"/>
        <end position="93"/>
    </location>
</feature>
<feature type="strand" evidence="18">
    <location>
        <begin position="97"/>
        <end position="101"/>
    </location>
</feature>
<feature type="helix" evidence="18">
    <location>
        <begin position="104"/>
        <end position="111"/>
    </location>
</feature>
<feature type="strand" evidence="18">
    <location>
        <begin position="118"/>
        <end position="123"/>
    </location>
</feature>
<feature type="helix" evidence="18">
    <location>
        <begin position="127"/>
        <end position="137"/>
    </location>
</feature>
<feature type="helix" evidence="18">
    <location>
        <begin position="142"/>
        <end position="158"/>
    </location>
</feature>
<feature type="turn" evidence="18">
    <location>
        <begin position="162"/>
        <end position="164"/>
    </location>
</feature>
<feature type="strand" evidence="18">
    <location>
        <begin position="166"/>
        <end position="170"/>
    </location>
</feature>
<feature type="helix" evidence="18">
    <location>
        <begin position="174"/>
        <end position="193"/>
    </location>
</feature>
<protein>
    <recommendedName>
        <fullName>Guanylate kinase</fullName>
        <ecNumber evidence="6">2.7.4.8</ecNumber>
    </recommendedName>
    <alternativeName>
        <fullName>GMP kinase</fullName>
    </alternativeName>
    <alternativeName>
        <fullName evidence="15">Guanylate kinase 1</fullName>
    </alternativeName>
</protein>
<comment type="function">
    <text evidence="1 4 6 8 9">Catalyzes the phosphorylation of GMP to GDP. Essential enzyme for recycling GMP and indirectly, cyclic GMP (cGMP) (PubMed:31201273). Involved in the cGMP metabolism in photoreceptors (By similarity). It may also have a role in the survival and growth progression of some tumors (PubMed:31201273). In addition to its physiological role, GUK1 is essential for converting prodrugs used for the treatment of cancers and viral infections into their pharmacologically active metabolites, most notably acyclovir, ganciclovir, and 6-thioguanine and its closely related analog 6-mercaptopurine (PubMed:197968, PubMed:6248551, PubMed:6306664).</text>
</comment>
<comment type="catalytic activity">
    <reaction evidence="6">
        <text>GMP + ATP = GDP + ADP</text>
        <dbReference type="Rhea" id="RHEA:20780"/>
        <dbReference type="ChEBI" id="CHEBI:30616"/>
        <dbReference type="ChEBI" id="CHEBI:58115"/>
        <dbReference type="ChEBI" id="CHEBI:58189"/>
        <dbReference type="ChEBI" id="CHEBI:456216"/>
        <dbReference type="EC" id="2.7.4.8"/>
    </reaction>
</comment>
<comment type="activity regulation">
    <text evidence="1">Up-regulated by RD3.</text>
</comment>
<comment type="biophysicochemical properties">
    <kinetics>
        <KM evidence="6">20.7 uM for GMP</KM>
        <text evidence="6">kcat is 58.5 sec(-1) with GMP as substrate.</text>
    </kinetics>
</comment>
<comment type="subunit">
    <text evidence="5 6">Monomer (PubMed:31201273). Interacts with RD3 (PubMed:29515371).</text>
</comment>
<comment type="interaction">
    <interactant intactId="EBI-2340074">
        <id>Q16774</id>
    </interactant>
    <interactant intactId="EBI-948354">
        <id>Q6DKK2</id>
        <label>TTC19</label>
    </interactant>
    <organismsDiffer>false</organismsDiffer>
    <experiments>2</experiments>
</comment>
<comment type="subcellular location">
    <subcellularLocation>
        <location evidence="2">Photoreceptor inner segment</location>
    </subcellularLocation>
    <subcellularLocation>
        <location evidence="2">Cytoplasm</location>
        <location evidence="2">Cytosol</location>
    </subcellularLocation>
    <text evidence="2">Colocalizes with RD3 in photoreceptor inner segments and to a lesser extent in the outer plexiform layer.</text>
</comment>
<comment type="subcellular location">
    <molecule>Isoform 2</molecule>
    <subcellularLocation>
        <location evidence="7">Mitochondrion</location>
    </subcellularLocation>
</comment>
<comment type="alternative products">
    <event type="alternative splicing"/>
    <isoform>
        <id>Q16774-1</id>
        <name>1</name>
        <sequence type="displayed"/>
    </isoform>
    <isoform>
        <id>Q16774-2</id>
        <name>2</name>
        <sequence type="described" ref="VSP_043778"/>
    </isoform>
    <isoform>
        <id>Q16774-3</id>
        <name>3</name>
        <sequence type="described" ref="VSP_043778 VSP_047372"/>
    </isoform>
</comment>
<comment type="tissue specificity">
    <text evidence="10">Widely expressed.</text>
</comment>
<comment type="disease" evidence="7">
    <disease id="DI-06989">
        <name>Mitochondrial DNA depletion syndrome 21</name>
        <acronym>MTDPS21</acronym>
        <description>An autosomal recessive mitochondrial disorder characterized by ptosis, ophthalmoparesis, myopathic proximal limb weakness, variable hepatopathy, and altered T-lymphocyte profiles. Multiple mtDNA deletions and depletion are detected in muscle, as well as mitochondrial respiratory chain deficiencies.</description>
        <dbReference type="MIM" id="621071"/>
    </disease>
    <text>The disease is caused by variants affecting the gene represented in this entry.</text>
</comment>
<comment type="similarity">
    <text evidence="14">Belongs to the guanylate kinase family.</text>
</comment>
<reference key="1">
    <citation type="journal article" date="1996" name="FEBS Lett.">
        <title>Human guanylate kinase (GUK1): cDNA sequence, expression and chromosomal localisation.</title>
        <authorList>
            <person name="Fitzgibbon J."/>
            <person name="Katsanis N."/>
            <person name="Wells D."/>
            <person name="Delhanty J."/>
            <person name="Vallins W."/>
            <person name="Hunt D.M."/>
        </authorList>
    </citation>
    <scope>NUCLEOTIDE SEQUENCE [MRNA] (ISOFORM 1)</scope>
    <source>
        <tissue>Retina</tissue>
    </source>
</reference>
<reference key="2">
    <citation type="journal article" date="1996" name="J. Biol. Chem.">
        <title>Cloning, characterization, and modeling of mouse and human guanylate kinases.</title>
        <authorList>
            <person name="Brady W.A."/>
            <person name="Kokoris M.S."/>
            <person name="Fitzgibbon M."/>
            <person name="Black M.E."/>
        </authorList>
    </citation>
    <scope>NUCLEOTIDE SEQUENCE [MRNA] (ISOFORM 1)</scope>
    <scope>TISSUE SPECIFICITY</scope>
</reference>
<reference key="3">
    <citation type="journal article" date="2004" name="Nat. Genet.">
        <title>Complete sequencing and characterization of 21,243 full-length human cDNAs.</title>
        <authorList>
            <person name="Ota T."/>
            <person name="Suzuki Y."/>
            <person name="Nishikawa T."/>
            <person name="Otsuki T."/>
            <person name="Sugiyama T."/>
            <person name="Irie R."/>
            <person name="Wakamatsu A."/>
            <person name="Hayashi K."/>
            <person name="Sato H."/>
            <person name="Nagai K."/>
            <person name="Kimura K."/>
            <person name="Makita H."/>
            <person name="Sekine M."/>
            <person name="Obayashi M."/>
            <person name="Nishi T."/>
            <person name="Shibahara T."/>
            <person name="Tanaka T."/>
            <person name="Ishii S."/>
            <person name="Yamamoto J."/>
            <person name="Saito K."/>
            <person name="Kawai Y."/>
            <person name="Isono Y."/>
            <person name="Nakamura Y."/>
            <person name="Nagahari K."/>
            <person name="Murakami K."/>
            <person name="Yasuda T."/>
            <person name="Iwayanagi T."/>
            <person name="Wagatsuma M."/>
            <person name="Shiratori A."/>
            <person name="Sudo H."/>
            <person name="Hosoiri T."/>
            <person name="Kaku Y."/>
            <person name="Kodaira H."/>
            <person name="Kondo H."/>
            <person name="Sugawara M."/>
            <person name="Takahashi M."/>
            <person name="Kanda K."/>
            <person name="Yokoi T."/>
            <person name="Furuya T."/>
            <person name="Kikkawa E."/>
            <person name="Omura Y."/>
            <person name="Abe K."/>
            <person name="Kamihara K."/>
            <person name="Katsuta N."/>
            <person name="Sato K."/>
            <person name="Tanikawa M."/>
            <person name="Yamazaki M."/>
            <person name="Ninomiya K."/>
            <person name="Ishibashi T."/>
            <person name="Yamashita H."/>
            <person name="Murakawa K."/>
            <person name="Fujimori K."/>
            <person name="Tanai H."/>
            <person name="Kimata M."/>
            <person name="Watanabe M."/>
            <person name="Hiraoka S."/>
            <person name="Chiba Y."/>
            <person name="Ishida S."/>
            <person name="Ono Y."/>
            <person name="Takiguchi S."/>
            <person name="Watanabe S."/>
            <person name="Yosida M."/>
            <person name="Hotuta T."/>
            <person name="Kusano J."/>
            <person name="Kanehori K."/>
            <person name="Takahashi-Fujii A."/>
            <person name="Hara H."/>
            <person name="Tanase T.-O."/>
            <person name="Nomura Y."/>
            <person name="Togiya S."/>
            <person name="Komai F."/>
            <person name="Hara R."/>
            <person name="Takeuchi K."/>
            <person name="Arita M."/>
            <person name="Imose N."/>
            <person name="Musashino K."/>
            <person name="Yuuki H."/>
            <person name="Oshima A."/>
            <person name="Sasaki N."/>
            <person name="Aotsuka S."/>
            <person name="Yoshikawa Y."/>
            <person name="Matsunawa H."/>
            <person name="Ichihara T."/>
            <person name="Shiohata N."/>
            <person name="Sano S."/>
            <person name="Moriya S."/>
            <person name="Momiyama H."/>
            <person name="Satoh N."/>
            <person name="Takami S."/>
            <person name="Terashima Y."/>
            <person name="Suzuki O."/>
            <person name="Nakagawa S."/>
            <person name="Senoh A."/>
            <person name="Mizoguchi H."/>
            <person name="Goto Y."/>
            <person name="Shimizu F."/>
            <person name="Wakebe H."/>
            <person name="Hishigaki H."/>
            <person name="Watanabe T."/>
            <person name="Sugiyama A."/>
            <person name="Takemoto M."/>
            <person name="Kawakami B."/>
            <person name="Yamazaki M."/>
            <person name="Watanabe K."/>
            <person name="Kumagai A."/>
            <person name="Itakura S."/>
            <person name="Fukuzumi Y."/>
            <person name="Fujimori Y."/>
            <person name="Komiyama M."/>
            <person name="Tashiro H."/>
            <person name="Tanigami A."/>
            <person name="Fujiwara T."/>
            <person name="Ono T."/>
            <person name="Yamada K."/>
            <person name="Fujii Y."/>
            <person name="Ozaki K."/>
            <person name="Hirao M."/>
            <person name="Ohmori Y."/>
            <person name="Kawabata A."/>
            <person name="Hikiji T."/>
            <person name="Kobatake N."/>
            <person name="Inagaki H."/>
            <person name="Ikema Y."/>
            <person name="Okamoto S."/>
            <person name="Okitani R."/>
            <person name="Kawakami T."/>
            <person name="Noguchi S."/>
            <person name="Itoh T."/>
            <person name="Shigeta K."/>
            <person name="Senba T."/>
            <person name="Matsumura K."/>
            <person name="Nakajima Y."/>
            <person name="Mizuno T."/>
            <person name="Morinaga M."/>
            <person name="Sasaki M."/>
            <person name="Togashi T."/>
            <person name="Oyama M."/>
            <person name="Hata H."/>
            <person name="Watanabe M."/>
            <person name="Komatsu T."/>
            <person name="Mizushima-Sugano J."/>
            <person name="Satoh T."/>
            <person name="Shirai Y."/>
            <person name="Takahashi Y."/>
            <person name="Nakagawa K."/>
            <person name="Okumura K."/>
            <person name="Nagase T."/>
            <person name="Nomura N."/>
            <person name="Kikuchi H."/>
            <person name="Masuho Y."/>
            <person name="Yamashita R."/>
            <person name="Nakai K."/>
            <person name="Yada T."/>
            <person name="Nakamura Y."/>
            <person name="Ohara O."/>
            <person name="Isogai T."/>
            <person name="Sugano S."/>
        </authorList>
    </citation>
    <scope>NUCLEOTIDE SEQUENCE [LARGE SCALE MRNA] (ISOFORM 2)</scope>
    <source>
        <tissue>Ovary</tissue>
    </source>
</reference>
<reference key="4">
    <citation type="journal article" date="2006" name="Nature">
        <title>The DNA sequence and biological annotation of human chromosome 1.</title>
        <authorList>
            <person name="Gregory S.G."/>
            <person name="Barlow K.F."/>
            <person name="McLay K.E."/>
            <person name="Kaul R."/>
            <person name="Swarbreck D."/>
            <person name="Dunham A."/>
            <person name="Scott C.E."/>
            <person name="Howe K.L."/>
            <person name="Woodfine K."/>
            <person name="Spencer C.C.A."/>
            <person name="Jones M.C."/>
            <person name="Gillson C."/>
            <person name="Searle S."/>
            <person name="Zhou Y."/>
            <person name="Kokocinski F."/>
            <person name="McDonald L."/>
            <person name="Evans R."/>
            <person name="Phillips K."/>
            <person name="Atkinson A."/>
            <person name="Cooper R."/>
            <person name="Jones C."/>
            <person name="Hall R.E."/>
            <person name="Andrews T.D."/>
            <person name="Lloyd C."/>
            <person name="Ainscough R."/>
            <person name="Almeida J.P."/>
            <person name="Ambrose K.D."/>
            <person name="Anderson F."/>
            <person name="Andrew R.W."/>
            <person name="Ashwell R.I.S."/>
            <person name="Aubin K."/>
            <person name="Babbage A.K."/>
            <person name="Bagguley C.L."/>
            <person name="Bailey J."/>
            <person name="Beasley H."/>
            <person name="Bethel G."/>
            <person name="Bird C.P."/>
            <person name="Bray-Allen S."/>
            <person name="Brown J.Y."/>
            <person name="Brown A.J."/>
            <person name="Buckley D."/>
            <person name="Burton J."/>
            <person name="Bye J."/>
            <person name="Carder C."/>
            <person name="Chapman J.C."/>
            <person name="Clark S.Y."/>
            <person name="Clarke G."/>
            <person name="Clee C."/>
            <person name="Cobley V."/>
            <person name="Collier R.E."/>
            <person name="Corby N."/>
            <person name="Coville G.J."/>
            <person name="Davies J."/>
            <person name="Deadman R."/>
            <person name="Dunn M."/>
            <person name="Earthrowl M."/>
            <person name="Ellington A.G."/>
            <person name="Errington H."/>
            <person name="Frankish A."/>
            <person name="Frankland J."/>
            <person name="French L."/>
            <person name="Garner P."/>
            <person name="Garnett J."/>
            <person name="Gay L."/>
            <person name="Ghori M.R.J."/>
            <person name="Gibson R."/>
            <person name="Gilby L.M."/>
            <person name="Gillett W."/>
            <person name="Glithero R.J."/>
            <person name="Grafham D.V."/>
            <person name="Griffiths C."/>
            <person name="Griffiths-Jones S."/>
            <person name="Grocock R."/>
            <person name="Hammond S."/>
            <person name="Harrison E.S.I."/>
            <person name="Hart E."/>
            <person name="Haugen E."/>
            <person name="Heath P.D."/>
            <person name="Holmes S."/>
            <person name="Holt K."/>
            <person name="Howden P.J."/>
            <person name="Hunt A.R."/>
            <person name="Hunt S.E."/>
            <person name="Hunter G."/>
            <person name="Isherwood J."/>
            <person name="James R."/>
            <person name="Johnson C."/>
            <person name="Johnson D."/>
            <person name="Joy A."/>
            <person name="Kay M."/>
            <person name="Kershaw J.K."/>
            <person name="Kibukawa M."/>
            <person name="Kimberley A.M."/>
            <person name="King A."/>
            <person name="Knights A.J."/>
            <person name="Lad H."/>
            <person name="Laird G."/>
            <person name="Lawlor S."/>
            <person name="Leongamornlert D.A."/>
            <person name="Lloyd D.M."/>
            <person name="Loveland J."/>
            <person name="Lovell J."/>
            <person name="Lush M.J."/>
            <person name="Lyne R."/>
            <person name="Martin S."/>
            <person name="Mashreghi-Mohammadi M."/>
            <person name="Matthews L."/>
            <person name="Matthews N.S.W."/>
            <person name="McLaren S."/>
            <person name="Milne S."/>
            <person name="Mistry S."/>
            <person name="Moore M.J.F."/>
            <person name="Nickerson T."/>
            <person name="O'Dell C.N."/>
            <person name="Oliver K."/>
            <person name="Palmeiri A."/>
            <person name="Palmer S.A."/>
            <person name="Parker A."/>
            <person name="Patel D."/>
            <person name="Pearce A.V."/>
            <person name="Peck A.I."/>
            <person name="Pelan S."/>
            <person name="Phelps K."/>
            <person name="Phillimore B.J."/>
            <person name="Plumb R."/>
            <person name="Rajan J."/>
            <person name="Raymond C."/>
            <person name="Rouse G."/>
            <person name="Saenphimmachak C."/>
            <person name="Sehra H.K."/>
            <person name="Sheridan E."/>
            <person name="Shownkeen R."/>
            <person name="Sims S."/>
            <person name="Skuce C.D."/>
            <person name="Smith M."/>
            <person name="Steward C."/>
            <person name="Subramanian S."/>
            <person name="Sycamore N."/>
            <person name="Tracey A."/>
            <person name="Tromans A."/>
            <person name="Van Helmond Z."/>
            <person name="Wall M."/>
            <person name="Wallis J.M."/>
            <person name="White S."/>
            <person name="Whitehead S.L."/>
            <person name="Wilkinson J.E."/>
            <person name="Willey D.L."/>
            <person name="Williams H."/>
            <person name="Wilming L."/>
            <person name="Wray P.W."/>
            <person name="Wu Z."/>
            <person name="Coulson A."/>
            <person name="Vaudin M."/>
            <person name="Sulston J.E."/>
            <person name="Durbin R.M."/>
            <person name="Hubbard T."/>
            <person name="Wooster R."/>
            <person name="Dunham I."/>
            <person name="Carter N.P."/>
            <person name="McVean G."/>
            <person name="Ross M.T."/>
            <person name="Harrow J."/>
            <person name="Olson M.V."/>
            <person name="Beck S."/>
            <person name="Rogers J."/>
            <person name="Bentley D.R."/>
        </authorList>
    </citation>
    <scope>NUCLEOTIDE SEQUENCE [LARGE SCALE GENOMIC DNA]</scope>
</reference>
<reference key="5">
    <citation type="submission" date="2005-07" db="EMBL/GenBank/DDBJ databases">
        <authorList>
            <person name="Mural R.J."/>
            <person name="Istrail S."/>
            <person name="Sutton G.G."/>
            <person name="Florea L."/>
            <person name="Halpern A.L."/>
            <person name="Mobarry C.M."/>
            <person name="Lippert R."/>
            <person name="Walenz B."/>
            <person name="Shatkay H."/>
            <person name="Dew I."/>
            <person name="Miller J.R."/>
            <person name="Flanigan M.J."/>
            <person name="Edwards N.J."/>
            <person name="Bolanos R."/>
            <person name="Fasulo D."/>
            <person name="Halldorsson B.V."/>
            <person name="Hannenhalli S."/>
            <person name="Turner R."/>
            <person name="Yooseph S."/>
            <person name="Lu F."/>
            <person name="Nusskern D.R."/>
            <person name="Shue B.C."/>
            <person name="Zheng X.H."/>
            <person name="Zhong F."/>
            <person name="Delcher A.L."/>
            <person name="Huson D.H."/>
            <person name="Kravitz S.A."/>
            <person name="Mouchard L."/>
            <person name="Reinert K."/>
            <person name="Remington K.A."/>
            <person name="Clark A.G."/>
            <person name="Waterman M.S."/>
            <person name="Eichler E.E."/>
            <person name="Adams M.D."/>
            <person name="Hunkapiller M.W."/>
            <person name="Myers E.W."/>
            <person name="Venter J.C."/>
        </authorList>
    </citation>
    <scope>NUCLEOTIDE SEQUENCE [LARGE SCALE GENOMIC DNA]</scope>
</reference>
<reference key="6">
    <citation type="journal article" date="2004" name="Genome Res.">
        <title>The status, quality, and expansion of the NIH full-length cDNA project: the Mammalian Gene Collection (MGC).</title>
        <authorList>
            <consortium name="The MGC Project Team"/>
        </authorList>
    </citation>
    <scope>NUCLEOTIDE SEQUENCE [LARGE SCALE MRNA] (ISOFORM 1)</scope>
    <source>
        <tissue>Lung</tissue>
    </source>
</reference>
<reference key="7">
    <citation type="journal article" date="1977" name="Biochem. Pharmacol.">
        <title>Reassessment of the interactions of guanylate kinase and 6-thioguanosine 5'-phosphate.</title>
        <authorList>
            <person name="Miller R.L."/>
            <person name="Adamczyk D.L."/>
            <person name="Spector T."/>
        </authorList>
    </citation>
    <scope>FUNCTION AS DRUG-METABOLIZING ENZYME</scope>
</reference>
<reference key="8">
    <citation type="journal article" date="1980" name="J. Biol. Chem.">
        <title>Phosphorylation of acyclovir (acycloguanosine) monophosphate by GMP kinase.</title>
        <authorList>
            <person name="Miller W.H."/>
            <person name="Miller R.L."/>
        </authorList>
    </citation>
    <scope>FUNCTION AS DRUG-METABOLIZING ENZYME</scope>
</reference>
<reference key="9">
    <citation type="journal article" date="1983" name="Proc. Natl. Acad. Sci. U.S.A.">
        <title>9-([2-hydroxy-1-(hydroxymethyl)ethoxy]methyl)guanine: a selective inhibitor of herpes group virus replication.</title>
        <authorList>
            <person name="Field A.K."/>
            <person name="Davies M.E."/>
            <person name="DeWitt C."/>
            <person name="Perry H.C."/>
            <person name="Liou R."/>
            <person name="Germershausen J."/>
            <person name="Karkas J.D."/>
            <person name="Ashton W.T."/>
            <person name="Johnston D.B."/>
            <person name="Tolman R.L."/>
        </authorList>
    </citation>
    <scope>FUNCTION AS DRUG-METABOLIZING ENZYME</scope>
</reference>
<reference key="10">
    <citation type="journal article" date="2009" name="Anal. Chem.">
        <title>Lys-N and trypsin cover complementary parts of the phosphoproteome in a refined SCX-based approach.</title>
        <authorList>
            <person name="Gauci S."/>
            <person name="Helbig A.O."/>
            <person name="Slijper M."/>
            <person name="Krijgsveld J."/>
            <person name="Heck A.J."/>
            <person name="Mohammed S."/>
        </authorList>
    </citation>
    <scope>ACETYLATION [LARGE SCALE ANALYSIS] AT SER-2</scope>
    <scope>CLEAVAGE OF INITIATOR METHIONINE [LARGE SCALE ANALYSIS]</scope>
    <scope>IDENTIFICATION BY MASS SPECTROMETRY [LARGE SCALE ANALYSIS]</scope>
</reference>
<reference key="11">
    <citation type="journal article" date="2011" name="BMC Syst. Biol.">
        <title>Initial characterization of the human central proteome.</title>
        <authorList>
            <person name="Burkard T.R."/>
            <person name="Planyavsky M."/>
            <person name="Kaupe I."/>
            <person name="Breitwieser F.P."/>
            <person name="Buerckstuemmer T."/>
            <person name="Bennett K.L."/>
            <person name="Superti-Furga G."/>
            <person name="Colinge J."/>
        </authorList>
    </citation>
    <scope>IDENTIFICATION BY MASS SPECTROMETRY [LARGE SCALE ANALYSIS]</scope>
</reference>
<reference key="12">
    <citation type="journal article" date="2014" name="J. Proteomics">
        <title>An enzyme assisted RP-RPLC approach for in-depth analysis of human liver phosphoproteome.</title>
        <authorList>
            <person name="Bian Y."/>
            <person name="Song C."/>
            <person name="Cheng K."/>
            <person name="Dong M."/>
            <person name="Wang F."/>
            <person name="Huang J."/>
            <person name="Sun D."/>
            <person name="Wang L."/>
            <person name="Ye M."/>
            <person name="Zou H."/>
        </authorList>
    </citation>
    <scope>IDENTIFICATION BY MASS SPECTROMETRY [LARGE SCALE ANALYSIS]</scope>
    <source>
        <tissue>Liver</tissue>
    </source>
</reference>
<reference key="13">
    <citation type="journal article" date="2015" name="Proteomics">
        <title>N-terminome analysis of the human mitochondrial proteome.</title>
        <authorList>
            <person name="Vaca Jacome A.S."/>
            <person name="Rabilloud T."/>
            <person name="Schaeffer-Reiss C."/>
            <person name="Rompais M."/>
            <person name="Ayoub D."/>
            <person name="Lane L."/>
            <person name="Bairoch A."/>
            <person name="Van Dorsselaer A."/>
            <person name="Carapito C."/>
        </authorList>
    </citation>
    <scope>IDENTIFICATION BY MASS SPECTROMETRY [LARGE SCALE ANALYSIS]</scope>
</reference>
<reference key="14">
    <citation type="journal article" date="2018" name="Front. Mol. Neurosci.">
        <title>Control of the Nucleotide Cycle in Photoreceptor Cell Extracts by Retinal Degeneration Protein 3.</title>
        <authorList>
            <person name="Wimberg H."/>
            <person name="Janssen-Bienhold U."/>
            <person name="Koch K.W."/>
        </authorList>
    </citation>
    <scope>INTERACTION WITH RD3</scope>
</reference>
<reference key="15">
    <citation type="journal article" date="2019" name="J. Biol. Chem.">
        <title>Solution structure and functional investigation of human guanylate kinase reveals allosteric networking and a crucial role for the enzyme in cancer.</title>
        <authorList>
            <person name="Khan N."/>
            <person name="Shah P.P."/>
            <person name="Ban D."/>
            <person name="Trigo-Mourino P."/>
            <person name="Carneiro M.G."/>
            <person name="DeLeeuw L."/>
            <person name="Dean W.L."/>
            <person name="Trent J.O."/>
            <person name="Beverly L.J."/>
            <person name="Konrad M."/>
            <person name="Lee D."/>
            <person name="Sabo T.M."/>
        </authorList>
    </citation>
    <scope>STRUCTURE BY NMR</scope>
    <scope>FUNCTION</scope>
    <scope>BIOPHYSICOCHEMICAL PROPERTIES</scope>
    <scope>MUTAGENESIS OF SER-2; GLY-3; LEU-25; VAL-91; ARG-96; ARG-116; SER-121 AND SER-186</scope>
    <scope>SUBUNIT</scope>
</reference>
<reference key="16">
    <citation type="journal article" date="2024" name="Ann. Neurol.">
        <title>Guanylate Kinase 1 Deficiency: A Novel and Potentially Treatable Mitochondrial DNA Depletion/Deletions Disease.</title>
        <authorList>
            <person name="Hidalgo-Gutierrez A."/>
            <person name="Shintaku J."/>
            <person name="Ramon J."/>
            <person name="Barriocanal-Casado E."/>
            <person name="Pesini A."/>
            <person name="Saneto R.P."/>
            <person name="Garrabou G."/>
            <person name="Milisenda J.C."/>
            <person name="Matas-Garcia A."/>
            <person name="Gort L."/>
            <person name="Ugarteburu O."/>
            <person name="Gu Y."/>
            <person name="Koganti L."/>
            <person name="Wang T."/>
            <person name="Tadesse S."/>
            <person name="Meneri M."/>
            <person name="Sciacco M."/>
            <person name="Wang S."/>
            <person name="Tanji K."/>
            <person name="Horwitz M.S."/>
            <person name="Dorschner M.O."/>
            <person name="Mansukhani M."/>
            <person name="Comi G.P."/>
            <person name="Ronchi D."/>
            <person name="Marti R."/>
            <person name="Ribes A."/>
            <person name="Tort F."/>
            <person name="Hirano M."/>
        </authorList>
    </citation>
    <scope>VARIANTS MTDPS21 ARG-11 AND 26-GLN--ALA-197 DEL</scope>
    <scope>INVOLVEMENT IN MTDPS21</scope>
    <scope>SUBCELLULAR LOCATION</scope>
</reference>
<proteinExistence type="evidence at protein level"/>